<feature type="chain" id="PRO_0000382567" description="UPF0502 protein Smlt0097">
    <location>
        <begin position="1"/>
        <end position="217"/>
    </location>
</feature>
<protein>
    <recommendedName>
        <fullName evidence="1">UPF0502 protein Smlt0097</fullName>
    </recommendedName>
</protein>
<proteinExistence type="inferred from homology"/>
<keyword id="KW-1185">Reference proteome</keyword>
<evidence type="ECO:0000255" key="1">
    <source>
        <dbReference type="HAMAP-Rule" id="MF_01584"/>
    </source>
</evidence>
<accession>B2FU56</accession>
<dbReference type="EMBL" id="AM743169">
    <property type="protein sequence ID" value="CAQ43708.1"/>
    <property type="molecule type" value="Genomic_DNA"/>
</dbReference>
<dbReference type="RefSeq" id="WP_012478689.1">
    <property type="nucleotide sequence ID" value="NC_010943.1"/>
</dbReference>
<dbReference type="SMR" id="B2FU56"/>
<dbReference type="EnsemblBacteria" id="CAQ43708">
    <property type="protein sequence ID" value="CAQ43708"/>
    <property type="gene ID" value="Smlt0097"/>
</dbReference>
<dbReference type="KEGG" id="sml:Smlt0097"/>
<dbReference type="eggNOG" id="COG3132">
    <property type="taxonomic scope" value="Bacteria"/>
</dbReference>
<dbReference type="HOGENOM" id="CLU_057831_0_0_6"/>
<dbReference type="Proteomes" id="UP000008840">
    <property type="component" value="Chromosome"/>
</dbReference>
<dbReference type="Gene3D" id="1.10.10.10">
    <property type="entry name" value="Winged helix-like DNA-binding domain superfamily/Winged helix DNA-binding domain"/>
    <property type="match status" value="2"/>
</dbReference>
<dbReference type="HAMAP" id="MF_01584">
    <property type="entry name" value="UPF0502"/>
    <property type="match status" value="1"/>
</dbReference>
<dbReference type="InterPro" id="IPR007432">
    <property type="entry name" value="DUF480"/>
</dbReference>
<dbReference type="InterPro" id="IPR036388">
    <property type="entry name" value="WH-like_DNA-bd_sf"/>
</dbReference>
<dbReference type="InterPro" id="IPR036390">
    <property type="entry name" value="WH_DNA-bd_sf"/>
</dbReference>
<dbReference type="PANTHER" id="PTHR38768">
    <property type="entry name" value="UPF0502 PROTEIN YCEH"/>
    <property type="match status" value="1"/>
</dbReference>
<dbReference type="PANTHER" id="PTHR38768:SF1">
    <property type="entry name" value="UPF0502 PROTEIN YCEH"/>
    <property type="match status" value="1"/>
</dbReference>
<dbReference type="Pfam" id="PF04337">
    <property type="entry name" value="DUF480"/>
    <property type="match status" value="1"/>
</dbReference>
<dbReference type="SUPFAM" id="SSF46785">
    <property type="entry name" value="Winged helix' DNA-binding domain"/>
    <property type="match status" value="2"/>
</dbReference>
<comment type="similarity">
    <text evidence="1">Belongs to the UPF0502 family.</text>
</comment>
<gene>
    <name type="ordered locus">Smlt0097</name>
</gene>
<reference key="1">
    <citation type="journal article" date="2008" name="Genome Biol.">
        <title>The complete genome, comparative and functional analysis of Stenotrophomonas maltophilia reveals an organism heavily shielded by drug resistance determinants.</title>
        <authorList>
            <person name="Crossman L.C."/>
            <person name="Gould V.C."/>
            <person name="Dow J.M."/>
            <person name="Vernikos G.S."/>
            <person name="Okazaki A."/>
            <person name="Sebaihia M."/>
            <person name="Saunders D."/>
            <person name="Arrowsmith C."/>
            <person name="Carver T."/>
            <person name="Peters N."/>
            <person name="Adlem E."/>
            <person name="Kerhornou A."/>
            <person name="Lord A."/>
            <person name="Murphy L."/>
            <person name="Seeger K."/>
            <person name="Squares R."/>
            <person name="Rutter S."/>
            <person name="Quail M.A."/>
            <person name="Rajandream M.A."/>
            <person name="Harris D."/>
            <person name="Churcher C."/>
            <person name="Bentley S.D."/>
            <person name="Parkhill J."/>
            <person name="Thomson N.R."/>
            <person name="Avison M.B."/>
        </authorList>
    </citation>
    <scope>NUCLEOTIDE SEQUENCE [LARGE SCALE GENOMIC DNA]</scope>
    <source>
        <strain>K279a</strain>
    </source>
</reference>
<sequence>MTDSVQTPDVPLLDAVQARLLGCLVEKEATTPDTYPLTVNAAQSAANQKTAREPVMNIDAGSVQHALRQLEALGLARQHFSSRADRYEHRLQAALDLTRQQTVLLALLLLRGPQTLGELITRSERLHRFADTDEARHAIERLQQRALLVVLPRASGQREDRYMHLLCGEVDGAALAARYASSGGGSSDAADPGLAERVAQLEAAVAELQAQLAELRG</sequence>
<organism>
    <name type="scientific">Stenotrophomonas maltophilia (strain K279a)</name>
    <dbReference type="NCBI Taxonomy" id="522373"/>
    <lineage>
        <taxon>Bacteria</taxon>
        <taxon>Pseudomonadati</taxon>
        <taxon>Pseudomonadota</taxon>
        <taxon>Gammaproteobacteria</taxon>
        <taxon>Lysobacterales</taxon>
        <taxon>Lysobacteraceae</taxon>
        <taxon>Stenotrophomonas</taxon>
        <taxon>Stenotrophomonas maltophilia group</taxon>
    </lineage>
</organism>
<name>Y097_STRMK</name>